<protein>
    <recommendedName>
        <fullName evidence="1">RNA chaperone ProQ</fullName>
    </recommendedName>
</protein>
<sequence length="208" mass="23167">MSEPEKLTKSKDVIAYLAEQFPDCFTIKGDAKPLKIGIFEDLAKRLEDDDKVSKTRLRTALRHYTNSWRYLYSVKTGAQRVNLDGEQVEAVTEEHQQHAQETLKESKAKVAEKNKATNKAAAKKAPAKDKPENTAKAKPKTAKKPAKPKVKLADVELNKLSVGQQVQVKAGNTPMSATVLELDKDDVQVQLQNGLIMKVKADKIFLRA</sequence>
<reference key="1">
    <citation type="journal article" date="2004" name="Proc. Natl. Acad. Sci. U.S.A.">
        <title>Genome sequence of the deep-sea gamma-proteobacterium Idiomarina loihiensis reveals amino acid fermentation as a source of carbon and energy.</title>
        <authorList>
            <person name="Hou S."/>
            <person name="Saw J.H."/>
            <person name="Lee K.S."/>
            <person name="Freitas T.A."/>
            <person name="Belisle C."/>
            <person name="Kawarabayasi Y."/>
            <person name="Donachie S.P."/>
            <person name="Pikina A."/>
            <person name="Galperin M.Y."/>
            <person name="Koonin E.V."/>
            <person name="Makarova K.S."/>
            <person name="Omelchenko M.V."/>
            <person name="Sorokin A."/>
            <person name="Wolf Y.I."/>
            <person name="Li Q.X."/>
            <person name="Keum Y.S."/>
            <person name="Campbell S."/>
            <person name="Denery J."/>
            <person name="Aizawa S."/>
            <person name="Shibata S."/>
            <person name="Malahoff A."/>
            <person name="Alam M."/>
        </authorList>
    </citation>
    <scope>NUCLEOTIDE SEQUENCE [LARGE SCALE GENOMIC DNA]</scope>
    <source>
        <strain>ATCC BAA-735 / DSM 15497 / L2-TR</strain>
    </source>
</reference>
<evidence type="ECO:0000255" key="1">
    <source>
        <dbReference type="HAMAP-Rule" id="MF_00749"/>
    </source>
</evidence>
<evidence type="ECO:0000256" key="2">
    <source>
        <dbReference type="SAM" id="MobiDB-lite"/>
    </source>
</evidence>
<accession>Q5QX59</accession>
<keyword id="KW-0143">Chaperone</keyword>
<keyword id="KW-0963">Cytoplasm</keyword>
<keyword id="KW-1185">Reference proteome</keyword>
<keyword id="KW-0694">RNA-binding</keyword>
<dbReference type="EMBL" id="AE017340">
    <property type="protein sequence ID" value="AAV82113.1"/>
    <property type="molecule type" value="Genomic_DNA"/>
</dbReference>
<dbReference type="RefSeq" id="WP_011234519.1">
    <property type="nucleotide sequence ID" value="NC_006512.1"/>
</dbReference>
<dbReference type="SMR" id="Q5QX59"/>
<dbReference type="STRING" id="283942.IL1273"/>
<dbReference type="GeneID" id="41336448"/>
<dbReference type="KEGG" id="ilo:IL1273"/>
<dbReference type="eggNOG" id="COG3109">
    <property type="taxonomic scope" value="Bacteria"/>
</dbReference>
<dbReference type="HOGENOM" id="CLU_113254_0_0_6"/>
<dbReference type="OrthoDB" id="8421419at2"/>
<dbReference type="Proteomes" id="UP000001171">
    <property type="component" value="Chromosome"/>
</dbReference>
<dbReference type="GO" id="GO:0005829">
    <property type="term" value="C:cytosol"/>
    <property type="evidence" value="ECO:0007669"/>
    <property type="project" value="TreeGrafter"/>
</dbReference>
<dbReference type="GO" id="GO:0033592">
    <property type="term" value="F:RNA strand annealing activity"/>
    <property type="evidence" value="ECO:0007669"/>
    <property type="project" value="UniProtKB-UniRule"/>
</dbReference>
<dbReference type="GO" id="GO:0034057">
    <property type="term" value="F:RNA strand-exchange activity"/>
    <property type="evidence" value="ECO:0007669"/>
    <property type="project" value="UniProtKB-UniRule"/>
</dbReference>
<dbReference type="GO" id="GO:0010608">
    <property type="term" value="P:post-transcriptional regulation of gene expression"/>
    <property type="evidence" value="ECO:0007669"/>
    <property type="project" value="InterPro"/>
</dbReference>
<dbReference type="Gene3D" id="1.10.1710.10">
    <property type="entry name" value="ProQ/FinO domain"/>
    <property type="match status" value="1"/>
</dbReference>
<dbReference type="HAMAP" id="MF_00749">
    <property type="entry name" value="ProQ"/>
    <property type="match status" value="1"/>
</dbReference>
<dbReference type="InterPro" id="IPR023529">
    <property type="entry name" value="ProQ"/>
</dbReference>
<dbReference type="InterPro" id="IPR016103">
    <property type="entry name" value="ProQ/FinO"/>
</dbReference>
<dbReference type="InterPro" id="IPR036442">
    <property type="entry name" value="ProQ/FinO_sf"/>
</dbReference>
<dbReference type="InterPro" id="IPR035236">
    <property type="entry name" value="ProQ_C"/>
</dbReference>
<dbReference type="NCBIfam" id="NF003434">
    <property type="entry name" value="PRK04950.1"/>
    <property type="match status" value="1"/>
</dbReference>
<dbReference type="PANTHER" id="PTHR38106">
    <property type="entry name" value="RNA CHAPERONE PROQ"/>
    <property type="match status" value="1"/>
</dbReference>
<dbReference type="PANTHER" id="PTHR38106:SF1">
    <property type="entry name" value="RNA CHAPERONE PROQ"/>
    <property type="match status" value="1"/>
</dbReference>
<dbReference type="Pfam" id="PF04352">
    <property type="entry name" value="ProQ"/>
    <property type="match status" value="1"/>
</dbReference>
<dbReference type="Pfam" id="PF17516">
    <property type="entry name" value="ProQ_C"/>
    <property type="match status" value="1"/>
</dbReference>
<dbReference type="SMART" id="SM00945">
    <property type="entry name" value="ProQ"/>
    <property type="match status" value="1"/>
</dbReference>
<dbReference type="SUPFAM" id="SSF48657">
    <property type="entry name" value="FinO-like"/>
    <property type="match status" value="1"/>
</dbReference>
<proteinExistence type="inferred from homology"/>
<organism>
    <name type="scientific">Idiomarina loihiensis (strain ATCC BAA-735 / DSM 15497 / L2-TR)</name>
    <dbReference type="NCBI Taxonomy" id="283942"/>
    <lineage>
        <taxon>Bacteria</taxon>
        <taxon>Pseudomonadati</taxon>
        <taxon>Pseudomonadota</taxon>
        <taxon>Gammaproteobacteria</taxon>
        <taxon>Alteromonadales</taxon>
        <taxon>Idiomarinaceae</taxon>
        <taxon>Idiomarina</taxon>
    </lineage>
</organism>
<comment type="function">
    <text evidence="1">RNA chaperone with significant RNA binding, RNA strand exchange and RNA duplexing activities.</text>
</comment>
<comment type="subcellular location">
    <subcellularLocation>
        <location evidence="1">Cytoplasm</location>
    </subcellularLocation>
</comment>
<comment type="similarity">
    <text evidence="1">Belongs to the ProQ family.</text>
</comment>
<gene>
    <name evidence="1" type="primary">proQ</name>
    <name type="ordered locus">IL1273</name>
</gene>
<feature type="chain" id="PRO_0000303091" description="RNA chaperone ProQ">
    <location>
        <begin position="1"/>
        <end position="208"/>
    </location>
</feature>
<feature type="region of interest" description="Disordered" evidence="2">
    <location>
        <begin position="99"/>
        <end position="149"/>
    </location>
</feature>
<feature type="compositionally biased region" description="Basic and acidic residues" evidence="2">
    <location>
        <begin position="99"/>
        <end position="115"/>
    </location>
</feature>
<feature type="compositionally biased region" description="Basic and acidic residues" evidence="2">
    <location>
        <begin position="126"/>
        <end position="135"/>
    </location>
</feature>
<feature type="compositionally biased region" description="Basic residues" evidence="2">
    <location>
        <begin position="137"/>
        <end position="149"/>
    </location>
</feature>
<name>PROQ_IDILO</name>